<evidence type="ECO:0000250" key="1">
    <source>
        <dbReference type="UniProtKB" id="P0AB87"/>
    </source>
</evidence>
<evidence type="ECO:0000250" key="2">
    <source>
        <dbReference type="UniProtKB" id="Q58813"/>
    </source>
</evidence>
<feature type="chain" id="PRO_0000342595" description="L-fuculose phosphate aldolase">
    <location>
        <begin position="1"/>
        <end position="181"/>
    </location>
</feature>
<feature type="active site" description="Proton donor/acceptor" evidence="1">
    <location>
        <position position="68"/>
    </location>
</feature>
<feature type="binding site" evidence="1">
    <location>
        <begin position="24"/>
        <end position="25"/>
    </location>
    <ligand>
        <name>substrate</name>
    </ligand>
</feature>
<feature type="binding site" evidence="1">
    <location>
        <begin position="39"/>
        <end position="40"/>
    </location>
    <ligand>
        <name>substrate</name>
    </ligand>
</feature>
<feature type="binding site" evidence="1">
    <location>
        <begin position="66"/>
        <end position="67"/>
    </location>
    <ligand>
        <name>substrate</name>
    </ligand>
</feature>
<feature type="binding site" evidence="1">
    <location>
        <position position="68"/>
    </location>
    <ligand>
        <name>Zn(2+)</name>
        <dbReference type="ChEBI" id="CHEBI:29105"/>
        <note>catalytic</note>
    </ligand>
</feature>
<feature type="binding site" evidence="1">
    <location>
        <position position="87"/>
    </location>
    <ligand>
        <name>Zn(2+)</name>
        <dbReference type="ChEBI" id="CHEBI:29105"/>
        <note>catalytic</note>
    </ligand>
</feature>
<feature type="binding site" evidence="1">
    <location>
        <position position="89"/>
    </location>
    <ligand>
        <name>Zn(2+)</name>
        <dbReference type="ChEBI" id="CHEBI:29105"/>
        <note>catalytic</note>
    </ligand>
</feature>
<feature type="binding site" evidence="1">
    <location>
        <position position="147"/>
    </location>
    <ligand>
        <name>Zn(2+)</name>
        <dbReference type="ChEBI" id="CHEBI:29105"/>
        <note>catalytic</note>
    </ligand>
</feature>
<comment type="function">
    <text evidence="2">Involved in the biosynthesis of the coenzyme F420 which requires phospholactate produced via the aldol cleavage of L-fuculose 1-phosphate and the NAD(+)-dependent oxidation of (S)-lactaldehyde. Catalyzes the reversible cleavage of L-fuculose 1-phosphate (Fuc1P) to yield dihydroxyacetone phosphate (DHAP) and S-lactaldehyde.</text>
</comment>
<comment type="catalytic activity">
    <reaction evidence="2">
        <text>L-fuculose 1-phosphate = (S)-lactaldehyde + dihydroxyacetone phosphate</text>
        <dbReference type="Rhea" id="RHEA:12933"/>
        <dbReference type="ChEBI" id="CHEBI:18041"/>
        <dbReference type="ChEBI" id="CHEBI:57642"/>
        <dbReference type="ChEBI" id="CHEBI:57846"/>
        <dbReference type="EC" id="4.1.2.17"/>
    </reaction>
</comment>
<comment type="cofactor">
    <cofactor evidence="2">
        <name>Zn(2+)</name>
        <dbReference type="ChEBI" id="CHEBI:29105"/>
    </cofactor>
    <text evidence="1">Binds 1 zinc ion per subunit.</text>
</comment>
<comment type="pathway">
    <text evidence="2">Cofactor biosynthesis; coenzyme F420 biosynthesis.</text>
</comment>
<comment type="subunit">
    <text evidence="2">Homotetramer.</text>
</comment>
<comment type="similarity">
    <text evidence="2">Belongs to the aldolase class II family. AraD/FucA subfamily.</text>
</comment>
<name>FUCA_METM5</name>
<protein>
    <recommendedName>
        <fullName evidence="2">L-fuculose phosphate aldolase</fullName>
        <ecNumber evidence="2">4.1.2.17</ecNumber>
    </recommendedName>
    <alternativeName>
        <fullName evidence="2">L-fuculose-1-phosphate aldolase</fullName>
    </alternativeName>
</protein>
<keyword id="KW-0456">Lyase</keyword>
<keyword id="KW-0479">Metal-binding</keyword>
<keyword id="KW-0862">Zinc</keyword>
<dbReference type="EC" id="4.1.2.17" evidence="2"/>
<dbReference type="EMBL" id="CP000609">
    <property type="protein sequence ID" value="ABO34718.1"/>
    <property type="molecule type" value="Genomic_DNA"/>
</dbReference>
<dbReference type="RefSeq" id="WP_011868173.1">
    <property type="nucleotide sequence ID" value="NC_009135.1"/>
</dbReference>
<dbReference type="SMR" id="A4FWY9"/>
<dbReference type="STRING" id="402880.MmarC5_0403"/>
<dbReference type="GeneID" id="4928407"/>
<dbReference type="KEGG" id="mmq:MmarC5_0403"/>
<dbReference type="eggNOG" id="arCOG04226">
    <property type="taxonomic scope" value="Archaea"/>
</dbReference>
<dbReference type="HOGENOM" id="CLU_006033_3_0_2"/>
<dbReference type="OrthoDB" id="18709at2157"/>
<dbReference type="UniPathway" id="UPA00071"/>
<dbReference type="Proteomes" id="UP000000253">
    <property type="component" value="Chromosome"/>
</dbReference>
<dbReference type="GO" id="GO:0005829">
    <property type="term" value="C:cytosol"/>
    <property type="evidence" value="ECO:0007669"/>
    <property type="project" value="TreeGrafter"/>
</dbReference>
<dbReference type="GO" id="GO:0008738">
    <property type="term" value="F:L-fuculose-phosphate aldolase activity"/>
    <property type="evidence" value="ECO:0000250"/>
    <property type="project" value="UniProtKB"/>
</dbReference>
<dbReference type="GO" id="GO:0008270">
    <property type="term" value="F:zinc ion binding"/>
    <property type="evidence" value="ECO:0000250"/>
    <property type="project" value="UniProtKB"/>
</dbReference>
<dbReference type="GO" id="GO:0019323">
    <property type="term" value="P:pentose catabolic process"/>
    <property type="evidence" value="ECO:0007669"/>
    <property type="project" value="TreeGrafter"/>
</dbReference>
<dbReference type="FunFam" id="3.40.225.10:FF:000008">
    <property type="entry name" value="Sugar aldolase"/>
    <property type="match status" value="1"/>
</dbReference>
<dbReference type="Gene3D" id="3.40.225.10">
    <property type="entry name" value="Class II aldolase/adducin N-terminal domain"/>
    <property type="match status" value="1"/>
</dbReference>
<dbReference type="InterPro" id="IPR050197">
    <property type="entry name" value="Aldolase_class_II_sugar_metab"/>
</dbReference>
<dbReference type="InterPro" id="IPR001303">
    <property type="entry name" value="Aldolase_II/adducin_N"/>
</dbReference>
<dbReference type="InterPro" id="IPR036409">
    <property type="entry name" value="Aldolase_II/adducin_N_sf"/>
</dbReference>
<dbReference type="InterPro" id="IPR053406">
    <property type="entry name" value="Fuculose-P_aldolase"/>
</dbReference>
<dbReference type="NCBIfam" id="NF040649">
    <property type="entry name" value="FucA_Meth"/>
    <property type="match status" value="1"/>
</dbReference>
<dbReference type="PANTHER" id="PTHR22789:SF0">
    <property type="entry name" value="3-OXO-TETRONATE 4-PHOSPHATE DECARBOXYLASE-RELATED"/>
    <property type="match status" value="1"/>
</dbReference>
<dbReference type="PANTHER" id="PTHR22789">
    <property type="entry name" value="FUCULOSE PHOSPHATE ALDOLASE"/>
    <property type="match status" value="1"/>
</dbReference>
<dbReference type="Pfam" id="PF00596">
    <property type="entry name" value="Aldolase_II"/>
    <property type="match status" value="1"/>
</dbReference>
<dbReference type="SMART" id="SM01007">
    <property type="entry name" value="Aldolase_II"/>
    <property type="match status" value="1"/>
</dbReference>
<dbReference type="SUPFAM" id="SSF53639">
    <property type="entry name" value="AraD/HMP-PK domain-like"/>
    <property type="match status" value="1"/>
</dbReference>
<proteinExistence type="inferred from homology"/>
<accession>A4FWY9</accession>
<gene>
    <name type="primary">fucA</name>
    <name type="ordered locus">MmarC5_0403</name>
</gene>
<sequence length="181" mass="20191">MNLSNFIKICHLLYDRKYVVGSGGNVSIKNKNLIYITPTGSILGFLNEEDICVADIEGNILKGKPTSELNMHLKIYQNKESINAIVHTHSMYCTAFSALDKKLELLTPEAEIFIKKIAYVDYFPCGSLELAENVSACVEDSIILKNHGIVTLGKDITEAYVKTEVLEEIAQLNYIMNNLGE</sequence>
<organism>
    <name type="scientific">Methanococcus maripaludis (strain C5 / ATCC BAA-1333)</name>
    <dbReference type="NCBI Taxonomy" id="402880"/>
    <lineage>
        <taxon>Archaea</taxon>
        <taxon>Methanobacteriati</taxon>
        <taxon>Methanobacteriota</taxon>
        <taxon>Methanomada group</taxon>
        <taxon>Methanococci</taxon>
        <taxon>Methanococcales</taxon>
        <taxon>Methanococcaceae</taxon>
        <taxon>Methanococcus</taxon>
    </lineage>
</organism>
<reference key="1">
    <citation type="submission" date="2007-03" db="EMBL/GenBank/DDBJ databases">
        <title>Complete sequence of chromosome of Methanococcus maripaludis C5.</title>
        <authorList>
            <consortium name="US DOE Joint Genome Institute"/>
            <person name="Copeland A."/>
            <person name="Lucas S."/>
            <person name="Lapidus A."/>
            <person name="Barry K."/>
            <person name="Glavina del Rio T."/>
            <person name="Dalin E."/>
            <person name="Tice H."/>
            <person name="Pitluck S."/>
            <person name="Chertkov O."/>
            <person name="Brettin T."/>
            <person name="Bruce D."/>
            <person name="Han C."/>
            <person name="Detter J.C."/>
            <person name="Schmutz J."/>
            <person name="Larimer F."/>
            <person name="Land M."/>
            <person name="Hauser L."/>
            <person name="Kyrpides N."/>
            <person name="Mikhailova N."/>
            <person name="Sieprawska-Lupa M."/>
            <person name="Whitman W.B."/>
            <person name="Richardson P."/>
        </authorList>
    </citation>
    <scope>NUCLEOTIDE SEQUENCE [LARGE SCALE GENOMIC DNA]</scope>
    <source>
        <strain>C5 / ATCC BAA-1333</strain>
    </source>
</reference>